<sequence>MTKRTASIKRQTTETTISLSLNLDGSGQAEMCTGVRLFDHMLSQLAKHGLFDINVSANGDDIHHLVEDVALTLGKAFNEALGERKGIVRMADATVPMDDSLATVALDLSGRGYAVVDLPFSKNDLTGFPTDLVRHFLETFAIEGRLNLHARILYGSNDHHKAEALFKALARALDKATSLDPRREGIAPSTKGMLEN</sequence>
<organism>
    <name type="scientific">Dehalococcoides mccartyi (strain ATCC BAA-2266 / KCTC 15142 / 195)</name>
    <name type="common">Dehalococcoides ethenogenes (strain 195)</name>
    <dbReference type="NCBI Taxonomy" id="243164"/>
    <lineage>
        <taxon>Bacteria</taxon>
        <taxon>Bacillati</taxon>
        <taxon>Chloroflexota</taxon>
        <taxon>Dehalococcoidia</taxon>
        <taxon>Dehalococcoidales</taxon>
        <taxon>Dehalococcoidaceae</taxon>
        <taxon>Dehalococcoides</taxon>
    </lineage>
</organism>
<gene>
    <name evidence="1" type="primary">hisB</name>
    <name type="ordered locus">DET0842</name>
</gene>
<name>HIS7_DEHM1</name>
<accession>Q3Z880</accession>
<keyword id="KW-0028">Amino-acid biosynthesis</keyword>
<keyword id="KW-0963">Cytoplasm</keyword>
<keyword id="KW-0368">Histidine biosynthesis</keyword>
<keyword id="KW-0456">Lyase</keyword>
<evidence type="ECO:0000255" key="1">
    <source>
        <dbReference type="HAMAP-Rule" id="MF_00076"/>
    </source>
</evidence>
<reference key="1">
    <citation type="journal article" date="2005" name="Science">
        <title>Genome sequence of the PCE-dechlorinating bacterium Dehalococcoides ethenogenes.</title>
        <authorList>
            <person name="Seshadri R."/>
            <person name="Adrian L."/>
            <person name="Fouts D.E."/>
            <person name="Eisen J.A."/>
            <person name="Phillippy A.M."/>
            <person name="Methe B.A."/>
            <person name="Ward N.L."/>
            <person name="Nelson W.C."/>
            <person name="DeBoy R.T."/>
            <person name="Khouri H.M."/>
            <person name="Kolonay J.F."/>
            <person name="Dodson R.J."/>
            <person name="Daugherty S.C."/>
            <person name="Brinkac L.M."/>
            <person name="Sullivan S.A."/>
            <person name="Madupu R."/>
            <person name="Nelson K.E."/>
            <person name="Kang K.H."/>
            <person name="Impraim M."/>
            <person name="Tran K."/>
            <person name="Robinson J.M."/>
            <person name="Forberger H.A."/>
            <person name="Fraser C.M."/>
            <person name="Zinder S.H."/>
            <person name="Heidelberg J.F."/>
        </authorList>
    </citation>
    <scope>NUCLEOTIDE SEQUENCE [LARGE SCALE GENOMIC DNA]</scope>
    <source>
        <strain>ATCC BAA-2266 / KCTC 15142 / 195</strain>
    </source>
</reference>
<feature type="chain" id="PRO_1000010275" description="Imidazoleglycerol-phosphate dehydratase">
    <location>
        <begin position="1"/>
        <end position="196"/>
    </location>
</feature>
<dbReference type="EC" id="4.2.1.19" evidence="1"/>
<dbReference type="EMBL" id="CP000027">
    <property type="protein sequence ID" value="AAW39900.1"/>
    <property type="molecule type" value="Genomic_DNA"/>
</dbReference>
<dbReference type="RefSeq" id="WP_010936570.1">
    <property type="nucleotide sequence ID" value="NC_002936.3"/>
</dbReference>
<dbReference type="SMR" id="Q3Z880"/>
<dbReference type="FunCoup" id="Q3Z880">
    <property type="interactions" value="293"/>
</dbReference>
<dbReference type="STRING" id="243164.DET0842"/>
<dbReference type="GeneID" id="3229862"/>
<dbReference type="KEGG" id="det:DET0842"/>
<dbReference type="PATRIC" id="fig|243164.10.peg.800"/>
<dbReference type="eggNOG" id="COG0131">
    <property type="taxonomic scope" value="Bacteria"/>
</dbReference>
<dbReference type="HOGENOM" id="CLU_044308_2_0_0"/>
<dbReference type="InParanoid" id="Q3Z880"/>
<dbReference type="UniPathway" id="UPA00031">
    <property type="reaction ID" value="UER00011"/>
</dbReference>
<dbReference type="Proteomes" id="UP000008289">
    <property type="component" value="Chromosome"/>
</dbReference>
<dbReference type="GO" id="GO:0005737">
    <property type="term" value="C:cytoplasm"/>
    <property type="evidence" value="ECO:0007669"/>
    <property type="project" value="UniProtKB-SubCell"/>
</dbReference>
<dbReference type="GO" id="GO:0004424">
    <property type="term" value="F:imidazoleglycerol-phosphate dehydratase activity"/>
    <property type="evidence" value="ECO:0007669"/>
    <property type="project" value="UniProtKB-UniRule"/>
</dbReference>
<dbReference type="GO" id="GO:0000105">
    <property type="term" value="P:L-histidine biosynthetic process"/>
    <property type="evidence" value="ECO:0007669"/>
    <property type="project" value="UniProtKB-UniRule"/>
</dbReference>
<dbReference type="CDD" id="cd07914">
    <property type="entry name" value="IGPD"/>
    <property type="match status" value="1"/>
</dbReference>
<dbReference type="FunFam" id="3.30.230.40:FF:000001">
    <property type="entry name" value="Imidazoleglycerol-phosphate dehydratase HisB"/>
    <property type="match status" value="1"/>
</dbReference>
<dbReference type="FunFam" id="3.30.230.40:FF:000003">
    <property type="entry name" value="Imidazoleglycerol-phosphate dehydratase HisB"/>
    <property type="match status" value="1"/>
</dbReference>
<dbReference type="Gene3D" id="3.30.230.40">
    <property type="entry name" value="Imidazole glycerol phosphate dehydratase, domain 1"/>
    <property type="match status" value="2"/>
</dbReference>
<dbReference type="HAMAP" id="MF_00076">
    <property type="entry name" value="HisB"/>
    <property type="match status" value="1"/>
</dbReference>
<dbReference type="InterPro" id="IPR038494">
    <property type="entry name" value="IGPD_sf"/>
</dbReference>
<dbReference type="InterPro" id="IPR000807">
    <property type="entry name" value="ImidazoleglycerolP_deHydtase"/>
</dbReference>
<dbReference type="InterPro" id="IPR020565">
    <property type="entry name" value="ImidazoleglycerP_deHydtase_CS"/>
</dbReference>
<dbReference type="InterPro" id="IPR020568">
    <property type="entry name" value="Ribosomal_Su5_D2-typ_SF"/>
</dbReference>
<dbReference type="NCBIfam" id="NF002111">
    <property type="entry name" value="PRK00951.2-1"/>
    <property type="match status" value="1"/>
</dbReference>
<dbReference type="NCBIfam" id="NF002114">
    <property type="entry name" value="PRK00951.2-4"/>
    <property type="match status" value="1"/>
</dbReference>
<dbReference type="NCBIfam" id="NF002116">
    <property type="entry name" value="PRK00951.2-6"/>
    <property type="match status" value="1"/>
</dbReference>
<dbReference type="PANTHER" id="PTHR23133:SF2">
    <property type="entry name" value="IMIDAZOLEGLYCEROL-PHOSPHATE DEHYDRATASE"/>
    <property type="match status" value="1"/>
</dbReference>
<dbReference type="PANTHER" id="PTHR23133">
    <property type="entry name" value="IMIDAZOLEGLYCEROL-PHOSPHATE DEHYDRATASE HIS7"/>
    <property type="match status" value="1"/>
</dbReference>
<dbReference type="Pfam" id="PF00475">
    <property type="entry name" value="IGPD"/>
    <property type="match status" value="1"/>
</dbReference>
<dbReference type="SUPFAM" id="SSF54211">
    <property type="entry name" value="Ribosomal protein S5 domain 2-like"/>
    <property type="match status" value="2"/>
</dbReference>
<dbReference type="PROSITE" id="PS00955">
    <property type="entry name" value="IGP_DEHYDRATASE_2"/>
    <property type="match status" value="1"/>
</dbReference>
<proteinExistence type="inferred from homology"/>
<comment type="catalytic activity">
    <reaction evidence="1">
        <text>D-erythro-1-(imidazol-4-yl)glycerol 3-phosphate = 3-(imidazol-4-yl)-2-oxopropyl phosphate + H2O</text>
        <dbReference type="Rhea" id="RHEA:11040"/>
        <dbReference type="ChEBI" id="CHEBI:15377"/>
        <dbReference type="ChEBI" id="CHEBI:57766"/>
        <dbReference type="ChEBI" id="CHEBI:58278"/>
        <dbReference type="EC" id="4.2.1.19"/>
    </reaction>
</comment>
<comment type="pathway">
    <text evidence="1">Amino-acid biosynthesis; L-histidine biosynthesis; L-histidine from 5-phospho-alpha-D-ribose 1-diphosphate: step 6/9.</text>
</comment>
<comment type="subcellular location">
    <subcellularLocation>
        <location evidence="1">Cytoplasm</location>
    </subcellularLocation>
</comment>
<comment type="similarity">
    <text evidence="1">Belongs to the imidazoleglycerol-phosphate dehydratase family.</text>
</comment>
<protein>
    <recommendedName>
        <fullName evidence="1">Imidazoleglycerol-phosphate dehydratase</fullName>
        <shortName evidence="1">IGPD</shortName>
        <ecNumber evidence="1">4.2.1.19</ecNumber>
    </recommendedName>
</protein>